<accession>B7NDU2</accession>
<reference key="1">
    <citation type="journal article" date="2009" name="PLoS Genet.">
        <title>Organised genome dynamics in the Escherichia coli species results in highly diverse adaptive paths.</title>
        <authorList>
            <person name="Touchon M."/>
            <person name="Hoede C."/>
            <person name="Tenaillon O."/>
            <person name="Barbe V."/>
            <person name="Baeriswyl S."/>
            <person name="Bidet P."/>
            <person name="Bingen E."/>
            <person name="Bonacorsi S."/>
            <person name="Bouchier C."/>
            <person name="Bouvet O."/>
            <person name="Calteau A."/>
            <person name="Chiapello H."/>
            <person name="Clermont O."/>
            <person name="Cruveiller S."/>
            <person name="Danchin A."/>
            <person name="Diard M."/>
            <person name="Dossat C."/>
            <person name="Karoui M.E."/>
            <person name="Frapy E."/>
            <person name="Garry L."/>
            <person name="Ghigo J.M."/>
            <person name="Gilles A.M."/>
            <person name="Johnson J."/>
            <person name="Le Bouguenec C."/>
            <person name="Lescat M."/>
            <person name="Mangenot S."/>
            <person name="Martinez-Jehanne V."/>
            <person name="Matic I."/>
            <person name="Nassif X."/>
            <person name="Oztas S."/>
            <person name="Petit M.A."/>
            <person name="Pichon C."/>
            <person name="Rouy Z."/>
            <person name="Ruf C.S."/>
            <person name="Schneider D."/>
            <person name="Tourret J."/>
            <person name="Vacherie B."/>
            <person name="Vallenet D."/>
            <person name="Medigue C."/>
            <person name="Rocha E.P.C."/>
            <person name="Denamur E."/>
        </authorList>
    </citation>
    <scope>NUCLEOTIDE SEQUENCE [LARGE SCALE GENOMIC DNA]</scope>
    <source>
        <strain>UMN026 / ExPEC</strain>
    </source>
</reference>
<proteinExistence type="inferred from homology"/>
<gene>
    <name evidence="1" type="primary">rpsJ</name>
    <name type="ordered locus">ECUMN_3794</name>
</gene>
<keyword id="KW-0687">Ribonucleoprotein</keyword>
<keyword id="KW-0689">Ribosomal protein</keyword>
<name>RS10_ECOLU</name>
<comment type="function">
    <text evidence="1">Involved in the binding of tRNA to the ribosomes.</text>
</comment>
<comment type="subunit">
    <text evidence="1">Part of the 30S ribosomal subunit.</text>
</comment>
<comment type="similarity">
    <text evidence="1">Belongs to the universal ribosomal protein uS10 family.</text>
</comment>
<protein>
    <recommendedName>
        <fullName evidence="1">Small ribosomal subunit protein uS10</fullName>
    </recommendedName>
    <alternativeName>
        <fullName evidence="2">30S ribosomal protein S10</fullName>
    </alternativeName>
</protein>
<feature type="chain" id="PRO_1000127121" description="Small ribosomal subunit protein uS10">
    <location>
        <begin position="1"/>
        <end position="103"/>
    </location>
</feature>
<evidence type="ECO:0000255" key="1">
    <source>
        <dbReference type="HAMAP-Rule" id="MF_00508"/>
    </source>
</evidence>
<evidence type="ECO:0000305" key="2"/>
<organism>
    <name type="scientific">Escherichia coli O17:K52:H18 (strain UMN026 / ExPEC)</name>
    <dbReference type="NCBI Taxonomy" id="585056"/>
    <lineage>
        <taxon>Bacteria</taxon>
        <taxon>Pseudomonadati</taxon>
        <taxon>Pseudomonadota</taxon>
        <taxon>Gammaproteobacteria</taxon>
        <taxon>Enterobacterales</taxon>
        <taxon>Enterobacteriaceae</taxon>
        <taxon>Escherichia</taxon>
    </lineage>
</organism>
<sequence length="103" mass="11736">MQNQRIRIRLKAFDHRLIDQATAEIVETAKRTGAQVRGPIPLPTRKERFTVLISPHVNKDARDQYEIRTHLRLVDIVEPTEKTVDALMRLDLAAGVDVQISLG</sequence>
<dbReference type="EMBL" id="CU928163">
    <property type="protein sequence ID" value="CAR14942.1"/>
    <property type="molecule type" value="Genomic_DNA"/>
</dbReference>
<dbReference type="RefSeq" id="WP_001181004.1">
    <property type="nucleotide sequence ID" value="NC_011751.1"/>
</dbReference>
<dbReference type="RefSeq" id="YP_002414447.1">
    <property type="nucleotide sequence ID" value="NC_011751.1"/>
</dbReference>
<dbReference type="SMR" id="B7NDU2"/>
<dbReference type="STRING" id="585056.ECUMN_3794"/>
<dbReference type="GeneID" id="93778666"/>
<dbReference type="KEGG" id="eum:ECUMN_3794"/>
<dbReference type="PATRIC" id="fig|585056.7.peg.3969"/>
<dbReference type="HOGENOM" id="CLU_122625_1_3_6"/>
<dbReference type="Proteomes" id="UP000007097">
    <property type="component" value="Chromosome"/>
</dbReference>
<dbReference type="GO" id="GO:1990904">
    <property type="term" value="C:ribonucleoprotein complex"/>
    <property type="evidence" value="ECO:0007669"/>
    <property type="project" value="UniProtKB-KW"/>
</dbReference>
<dbReference type="GO" id="GO:0005840">
    <property type="term" value="C:ribosome"/>
    <property type="evidence" value="ECO:0007669"/>
    <property type="project" value="UniProtKB-KW"/>
</dbReference>
<dbReference type="GO" id="GO:0003735">
    <property type="term" value="F:structural constituent of ribosome"/>
    <property type="evidence" value="ECO:0007669"/>
    <property type="project" value="InterPro"/>
</dbReference>
<dbReference type="GO" id="GO:0000049">
    <property type="term" value="F:tRNA binding"/>
    <property type="evidence" value="ECO:0007669"/>
    <property type="project" value="UniProtKB-UniRule"/>
</dbReference>
<dbReference type="GO" id="GO:0006412">
    <property type="term" value="P:translation"/>
    <property type="evidence" value="ECO:0007669"/>
    <property type="project" value="UniProtKB-UniRule"/>
</dbReference>
<dbReference type="FunFam" id="3.30.70.600:FF:000001">
    <property type="entry name" value="30S ribosomal protein S10"/>
    <property type="match status" value="1"/>
</dbReference>
<dbReference type="Gene3D" id="3.30.70.600">
    <property type="entry name" value="Ribosomal protein S10 domain"/>
    <property type="match status" value="1"/>
</dbReference>
<dbReference type="HAMAP" id="MF_00508">
    <property type="entry name" value="Ribosomal_uS10"/>
    <property type="match status" value="1"/>
</dbReference>
<dbReference type="InterPro" id="IPR001848">
    <property type="entry name" value="Ribosomal_uS10"/>
</dbReference>
<dbReference type="InterPro" id="IPR018268">
    <property type="entry name" value="Ribosomal_uS10_CS"/>
</dbReference>
<dbReference type="InterPro" id="IPR027486">
    <property type="entry name" value="Ribosomal_uS10_dom"/>
</dbReference>
<dbReference type="InterPro" id="IPR036838">
    <property type="entry name" value="Ribosomal_uS10_dom_sf"/>
</dbReference>
<dbReference type="NCBIfam" id="NF001861">
    <property type="entry name" value="PRK00596.1"/>
    <property type="match status" value="1"/>
</dbReference>
<dbReference type="NCBIfam" id="TIGR01049">
    <property type="entry name" value="rpsJ_bact"/>
    <property type="match status" value="1"/>
</dbReference>
<dbReference type="PANTHER" id="PTHR11700">
    <property type="entry name" value="30S RIBOSOMAL PROTEIN S10 FAMILY MEMBER"/>
    <property type="match status" value="1"/>
</dbReference>
<dbReference type="Pfam" id="PF00338">
    <property type="entry name" value="Ribosomal_S10"/>
    <property type="match status" value="1"/>
</dbReference>
<dbReference type="PRINTS" id="PR00971">
    <property type="entry name" value="RIBOSOMALS10"/>
</dbReference>
<dbReference type="SMART" id="SM01403">
    <property type="entry name" value="Ribosomal_S10"/>
    <property type="match status" value="1"/>
</dbReference>
<dbReference type="SUPFAM" id="SSF54999">
    <property type="entry name" value="Ribosomal protein S10"/>
    <property type="match status" value="1"/>
</dbReference>
<dbReference type="PROSITE" id="PS00361">
    <property type="entry name" value="RIBOSOMAL_S10"/>
    <property type="match status" value="1"/>
</dbReference>